<dbReference type="EC" id="2.7.11.18"/>
<dbReference type="EMBL" id="AAFI02000006">
    <property type="protein sequence ID" value="EAL71639.1"/>
    <property type="molecule type" value="Genomic_DNA"/>
</dbReference>
<dbReference type="RefSeq" id="XP_645596.1">
    <property type="nucleotide sequence ID" value="XM_640504.1"/>
</dbReference>
<dbReference type="SMR" id="Q86AD7"/>
<dbReference type="FunCoup" id="Q86AD7">
    <property type="interactions" value="16"/>
</dbReference>
<dbReference type="STRING" id="44689.Q86AD7"/>
<dbReference type="PaxDb" id="44689-DDB0216308"/>
<dbReference type="EnsemblProtists" id="EAL71639">
    <property type="protein sequence ID" value="EAL71639"/>
    <property type="gene ID" value="DDB_G0271550"/>
</dbReference>
<dbReference type="GeneID" id="8618051"/>
<dbReference type="KEGG" id="ddi:DDB_G0271550"/>
<dbReference type="dictyBase" id="DDB_G0271550"/>
<dbReference type="VEuPathDB" id="AmoebaDB:DDB_G0271550"/>
<dbReference type="eggNOG" id="KOG0032">
    <property type="taxonomic scope" value="Eukaryota"/>
</dbReference>
<dbReference type="HOGENOM" id="CLU_000288_63_0_1"/>
<dbReference type="InParanoid" id="Q86AD7"/>
<dbReference type="OMA" id="YACKIMA"/>
<dbReference type="PhylomeDB" id="Q86AD7"/>
<dbReference type="PRO" id="PR:Q86AD7"/>
<dbReference type="Proteomes" id="UP000002195">
    <property type="component" value="Chromosome 2"/>
</dbReference>
<dbReference type="GO" id="GO:0005737">
    <property type="term" value="C:cytoplasm"/>
    <property type="evidence" value="ECO:0000318"/>
    <property type="project" value="GO_Central"/>
</dbReference>
<dbReference type="GO" id="GO:0005524">
    <property type="term" value="F:ATP binding"/>
    <property type="evidence" value="ECO:0007669"/>
    <property type="project" value="UniProtKB-KW"/>
</dbReference>
<dbReference type="GO" id="GO:0004687">
    <property type="term" value="F:myosin light chain kinase activity"/>
    <property type="evidence" value="ECO:0007669"/>
    <property type="project" value="UniProtKB-EC"/>
</dbReference>
<dbReference type="GO" id="GO:0004674">
    <property type="term" value="F:protein serine/threonine kinase activity"/>
    <property type="evidence" value="ECO:0000250"/>
    <property type="project" value="dictyBase"/>
</dbReference>
<dbReference type="GO" id="GO:0007165">
    <property type="term" value="P:signal transduction"/>
    <property type="evidence" value="ECO:0000318"/>
    <property type="project" value="GO_Central"/>
</dbReference>
<dbReference type="CDD" id="cd05117">
    <property type="entry name" value="STKc_CAMK"/>
    <property type="match status" value="1"/>
</dbReference>
<dbReference type="FunFam" id="1.10.510.10:FF:001435">
    <property type="entry name" value="Probable myosin light chain kinase DDB_G0275057"/>
    <property type="match status" value="1"/>
</dbReference>
<dbReference type="FunFam" id="3.30.200.20:FF:001250">
    <property type="entry name" value="Probable myosin light chain kinase DDB_G0275057"/>
    <property type="match status" value="1"/>
</dbReference>
<dbReference type="Gene3D" id="3.30.200.20">
    <property type="entry name" value="Phosphorylase Kinase, domain 1"/>
    <property type="match status" value="1"/>
</dbReference>
<dbReference type="Gene3D" id="1.10.510.10">
    <property type="entry name" value="Transferase(Phosphotransferase) domain 1"/>
    <property type="match status" value="1"/>
</dbReference>
<dbReference type="InterPro" id="IPR011009">
    <property type="entry name" value="Kinase-like_dom_sf"/>
</dbReference>
<dbReference type="InterPro" id="IPR000719">
    <property type="entry name" value="Prot_kinase_dom"/>
</dbReference>
<dbReference type="InterPro" id="IPR017441">
    <property type="entry name" value="Protein_kinase_ATP_BS"/>
</dbReference>
<dbReference type="InterPro" id="IPR008271">
    <property type="entry name" value="Ser/Thr_kinase_AS"/>
</dbReference>
<dbReference type="PANTHER" id="PTHR24342:SF14">
    <property type="entry name" value="DEATH-ASSOCIATED PROTEIN KINASE DAPK-1"/>
    <property type="match status" value="1"/>
</dbReference>
<dbReference type="PANTHER" id="PTHR24342">
    <property type="entry name" value="SERINE/THREONINE-PROTEIN KINASE 17"/>
    <property type="match status" value="1"/>
</dbReference>
<dbReference type="Pfam" id="PF00069">
    <property type="entry name" value="Pkinase"/>
    <property type="match status" value="1"/>
</dbReference>
<dbReference type="SMART" id="SM00220">
    <property type="entry name" value="S_TKc"/>
    <property type="match status" value="1"/>
</dbReference>
<dbReference type="SUPFAM" id="SSF56112">
    <property type="entry name" value="Protein kinase-like (PK-like)"/>
    <property type="match status" value="1"/>
</dbReference>
<dbReference type="PROSITE" id="PS00107">
    <property type="entry name" value="PROTEIN_KINASE_ATP"/>
    <property type="match status" value="1"/>
</dbReference>
<dbReference type="PROSITE" id="PS50011">
    <property type="entry name" value="PROTEIN_KINASE_DOM"/>
    <property type="match status" value="1"/>
</dbReference>
<dbReference type="PROSITE" id="PS00108">
    <property type="entry name" value="PROTEIN_KINASE_ST"/>
    <property type="match status" value="1"/>
</dbReference>
<comment type="function">
    <text>May phosphorylate a specific serine in the N-terminus of a myosin light chain.</text>
</comment>
<comment type="catalytic activity">
    <reaction>
        <text>L-seryl-[myosin light chain] + ATP = O-phospho-L-seryl-[myosin light chain] + ADP + H(+)</text>
        <dbReference type="Rhea" id="RHEA:22004"/>
        <dbReference type="Rhea" id="RHEA-COMP:13684"/>
        <dbReference type="Rhea" id="RHEA-COMP:13685"/>
        <dbReference type="ChEBI" id="CHEBI:15378"/>
        <dbReference type="ChEBI" id="CHEBI:29999"/>
        <dbReference type="ChEBI" id="CHEBI:30616"/>
        <dbReference type="ChEBI" id="CHEBI:83421"/>
        <dbReference type="ChEBI" id="CHEBI:456216"/>
        <dbReference type="EC" id="2.7.11.18"/>
    </reaction>
</comment>
<comment type="catalytic activity">
    <reaction>
        <text>L-threonyl-[myosin light chain] + ATP = O-phospho-L-threonyl-[myosin light chain] + ADP + H(+)</text>
        <dbReference type="Rhea" id="RHEA:53900"/>
        <dbReference type="Rhea" id="RHEA-COMP:13686"/>
        <dbReference type="Rhea" id="RHEA-COMP:13687"/>
        <dbReference type="ChEBI" id="CHEBI:15378"/>
        <dbReference type="ChEBI" id="CHEBI:30013"/>
        <dbReference type="ChEBI" id="CHEBI:30616"/>
        <dbReference type="ChEBI" id="CHEBI:61977"/>
        <dbReference type="ChEBI" id="CHEBI:456216"/>
        <dbReference type="EC" id="2.7.11.18"/>
    </reaction>
</comment>
<comment type="similarity">
    <text evidence="4">Belongs to the protein kinase superfamily. CAMK Ser/Thr protein kinase family. CaMK subfamily.</text>
</comment>
<proteinExistence type="inferred from homology"/>
<feature type="chain" id="PRO_0000367461" description="Probable myosin light chain kinase DDB_G0271550">
    <location>
        <begin position="1"/>
        <end position="392"/>
    </location>
</feature>
<feature type="domain" description="Protein kinase" evidence="1">
    <location>
        <begin position="20"/>
        <end position="278"/>
    </location>
</feature>
<feature type="region of interest" description="Disordered" evidence="3">
    <location>
        <begin position="317"/>
        <end position="392"/>
    </location>
</feature>
<feature type="compositionally biased region" description="Polar residues" evidence="3">
    <location>
        <begin position="317"/>
        <end position="326"/>
    </location>
</feature>
<feature type="compositionally biased region" description="Low complexity" evidence="3">
    <location>
        <begin position="327"/>
        <end position="392"/>
    </location>
</feature>
<feature type="active site" description="Proton acceptor" evidence="1 2">
    <location>
        <position position="142"/>
    </location>
</feature>
<feature type="binding site" evidence="1">
    <location>
        <begin position="26"/>
        <end position="34"/>
    </location>
    <ligand>
        <name>ATP</name>
        <dbReference type="ChEBI" id="CHEBI:30616"/>
    </ligand>
</feature>
<feature type="binding site" evidence="1">
    <location>
        <position position="49"/>
    </location>
    <ligand>
        <name>ATP</name>
        <dbReference type="ChEBI" id="CHEBI:30616"/>
    </ligand>
</feature>
<protein>
    <recommendedName>
        <fullName>Probable myosin light chain kinase DDB_G0271550</fullName>
        <ecNumber>2.7.11.18</ecNumber>
    </recommendedName>
</protein>
<gene>
    <name type="ORF">DDB_G0271550</name>
</gene>
<name>MYLKB_DICDI</name>
<sequence length="392" mass="44504">MLKLFKRIGRKKDSKIEDFYEFGPEIGRGAFSIVRQGTHKDTGDQVAIKAISKQHVSEADMKRFTREIEIMKKLKHKNIIQLIEVFDSNDYLYLVLELIRGGELFDKIVEKGNYSEKDACNLVRQIVSAVEYMHQHGVCHRDLKPENLLCSGDDEKEEIVRIADFGLSKIFEGGEELKTACGTPDYVAPEILECKPYDTSVDMWSIGVITYILLCGFAPFYADTHHELFQKILDLEYDFPEPEWNGITDLAKDFISQLLIINPEERWTASQCIKHPWLAENHGDKELKSLDSAISSMKDYVRNREASTSNILKMRASQSTPNLHSANSNTNTNSLSSSNSNNTTSNSNNNNNNNSNNSNNNNNNSNNNNNINNNNNNNNNNNNNNNNNNNNI</sequence>
<accession>Q86AD7</accession>
<accession>Q55AV0</accession>
<organism>
    <name type="scientific">Dictyostelium discoideum</name>
    <name type="common">Social amoeba</name>
    <dbReference type="NCBI Taxonomy" id="44689"/>
    <lineage>
        <taxon>Eukaryota</taxon>
        <taxon>Amoebozoa</taxon>
        <taxon>Evosea</taxon>
        <taxon>Eumycetozoa</taxon>
        <taxon>Dictyostelia</taxon>
        <taxon>Dictyosteliales</taxon>
        <taxon>Dictyosteliaceae</taxon>
        <taxon>Dictyostelium</taxon>
    </lineage>
</organism>
<keyword id="KW-0067">ATP-binding</keyword>
<keyword id="KW-0418">Kinase</keyword>
<keyword id="KW-0547">Nucleotide-binding</keyword>
<keyword id="KW-1185">Reference proteome</keyword>
<keyword id="KW-0723">Serine/threonine-protein kinase</keyword>
<keyword id="KW-0808">Transferase</keyword>
<reference key="1">
    <citation type="journal article" date="2002" name="Nature">
        <title>Sequence and analysis of chromosome 2 of Dictyostelium discoideum.</title>
        <authorList>
            <person name="Gloeckner G."/>
            <person name="Eichinger L."/>
            <person name="Szafranski K."/>
            <person name="Pachebat J.A."/>
            <person name="Bankier A.T."/>
            <person name="Dear P.H."/>
            <person name="Lehmann R."/>
            <person name="Baumgart C."/>
            <person name="Parra G."/>
            <person name="Abril J.F."/>
            <person name="Guigo R."/>
            <person name="Kumpf K."/>
            <person name="Tunggal B."/>
            <person name="Cox E.C."/>
            <person name="Quail M.A."/>
            <person name="Platzer M."/>
            <person name="Rosenthal A."/>
            <person name="Noegel A.A."/>
        </authorList>
    </citation>
    <scope>NUCLEOTIDE SEQUENCE [LARGE SCALE GENOMIC DNA]</scope>
    <source>
        <strain>AX4</strain>
    </source>
</reference>
<reference key="2">
    <citation type="journal article" date="2005" name="Nature">
        <title>The genome of the social amoeba Dictyostelium discoideum.</title>
        <authorList>
            <person name="Eichinger L."/>
            <person name="Pachebat J.A."/>
            <person name="Gloeckner G."/>
            <person name="Rajandream M.A."/>
            <person name="Sucgang R."/>
            <person name="Berriman M."/>
            <person name="Song J."/>
            <person name="Olsen R."/>
            <person name="Szafranski K."/>
            <person name="Xu Q."/>
            <person name="Tunggal B."/>
            <person name="Kummerfeld S."/>
            <person name="Madera M."/>
            <person name="Konfortov B.A."/>
            <person name="Rivero F."/>
            <person name="Bankier A.T."/>
            <person name="Lehmann R."/>
            <person name="Hamlin N."/>
            <person name="Davies R."/>
            <person name="Gaudet P."/>
            <person name="Fey P."/>
            <person name="Pilcher K."/>
            <person name="Chen G."/>
            <person name="Saunders D."/>
            <person name="Sodergren E.J."/>
            <person name="Davis P."/>
            <person name="Kerhornou A."/>
            <person name="Nie X."/>
            <person name="Hall N."/>
            <person name="Anjard C."/>
            <person name="Hemphill L."/>
            <person name="Bason N."/>
            <person name="Farbrother P."/>
            <person name="Desany B."/>
            <person name="Just E."/>
            <person name="Morio T."/>
            <person name="Rost R."/>
            <person name="Churcher C.M."/>
            <person name="Cooper J."/>
            <person name="Haydock S."/>
            <person name="van Driessche N."/>
            <person name="Cronin A."/>
            <person name="Goodhead I."/>
            <person name="Muzny D.M."/>
            <person name="Mourier T."/>
            <person name="Pain A."/>
            <person name="Lu M."/>
            <person name="Harper D."/>
            <person name="Lindsay R."/>
            <person name="Hauser H."/>
            <person name="James K.D."/>
            <person name="Quiles M."/>
            <person name="Madan Babu M."/>
            <person name="Saito T."/>
            <person name="Buchrieser C."/>
            <person name="Wardroper A."/>
            <person name="Felder M."/>
            <person name="Thangavelu M."/>
            <person name="Johnson D."/>
            <person name="Knights A."/>
            <person name="Loulseged H."/>
            <person name="Mungall K.L."/>
            <person name="Oliver K."/>
            <person name="Price C."/>
            <person name="Quail M.A."/>
            <person name="Urushihara H."/>
            <person name="Hernandez J."/>
            <person name="Rabbinowitsch E."/>
            <person name="Steffen D."/>
            <person name="Sanders M."/>
            <person name="Ma J."/>
            <person name="Kohara Y."/>
            <person name="Sharp S."/>
            <person name="Simmonds M.N."/>
            <person name="Spiegler S."/>
            <person name="Tivey A."/>
            <person name="Sugano S."/>
            <person name="White B."/>
            <person name="Walker D."/>
            <person name="Woodward J.R."/>
            <person name="Winckler T."/>
            <person name="Tanaka Y."/>
            <person name="Shaulsky G."/>
            <person name="Schleicher M."/>
            <person name="Weinstock G.M."/>
            <person name="Rosenthal A."/>
            <person name="Cox E.C."/>
            <person name="Chisholm R.L."/>
            <person name="Gibbs R.A."/>
            <person name="Loomis W.F."/>
            <person name="Platzer M."/>
            <person name="Kay R.R."/>
            <person name="Williams J.G."/>
            <person name="Dear P.H."/>
            <person name="Noegel A.A."/>
            <person name="Barrell B.G."/>
            <person name="Kuspa A."/>
        </authorList>
    </citation>
    <scope>NUCLEOTIDE SEQUENCE [LARGE SCALE GENOMIC DNA]</scope>
    <source>
        <strain>AX4</strain>
    </source>
</reference>
<evidence type="ECO:0000255" key="1">
    <source>
        <dbReference type="PROSITE-ProRule" id="PRU00159"/>
    </source>
</evidence>
<evidence type="ECO:0000255" key="2">
    <source>
        <dbReference type="PROSITE-ProRule" id="PRU10027"/>
    </source>
</evidence>
<evidence type="ECO:0000256" key="3">
    <source>
        <dbReference type="SAM" id="MobiDB-lite"/>
    </source>
</evidence>
<evidence type="ECO:0000305" key="4"/>